<sequence length="77" mass="9150">MKEQKWIHEGLITESLPNGMFRVRLDNEDLILGYVSGKIRRSFIRILPGDRVKIEVSRYDSTRGRIIYRLRNKDSKD</sequence>
<protein>
    <recommendedName>
        <fullName evidence="1">Translation initiation factor IF-1, chloroplastic</fullName>
    </recommendedName>
</protein>
<gene>
    <name evidence="1" type="primary">infA</name>
</gene>
<proteinExistence type="inferred from homology"/>
<keyword id="KW-0150">Chloroplast</keyword>
<keyword id="KW-0396">Initiation factor</keyword>
<keyword id="KW-0934">Plastid</keyword>
<keyword id="KW-0648">Protein biosynthesis</keyword>
<keyword id="KW-0694">RNA-binding</keyword>
<keyword id="KW-0699">rRNA-binding</keyword>
<feature type="chain" id="PRO_0000095939" description="Translation initiation factor IF-1, chloroplastic">
    <location>
        <begin position="1"/>
        <end position="77"/>
    </location>
</feature>
<feature type="domain" description="S1-like" evidence="1">
    <location>
        <begin position="1"/>
        <end position="71"/>
    </location>
</feature>
<evidence type="ECO:0000255" key="1">
    <source>
        <dbReference type="HAMAP-Rule" id="MF_00075"/>
    </source>
</evidence>
<dbReference type="EMBL" id="AF347641">
    <property type="protein sequence ID" value="AAK38864.1"/>
    <property type="molecule type" value="Genomic_DNA"/>
</dbReference>
<dbReference type="SMR" id="Q94PL3"/>
<dbReference type="GO" id="GO:0009507">
    <property type="term" value="C:chloroplast"/>
    <property type="evidence" value="ECO:0007669"/>
    <property type="project" value="UniProtKB-SubCell"/>
</dbReference>
<dbReference type="GO" id="GO:0005829">
    <property type="term" value="C:cytosol"/>
    <property type="evidence" value="ECO:0007669"/>
    <property type="project" value="TreeGrafter"/>
</dbReference>
<dbReference type="GO" id="GO:0043022">
    <property type="term" value="F:ribosome binding"/>
    <property type="evidence" value="ECO:0007669"/>
    <property type="project" value="UniProtKB-UniRule"/>
</dbReference>
<dbReference type="GO" id="GO:0019843">
    <property type="term" value="F:rRNA binding"/>
    <property type="evidence" value="ECO:0007669"/>
    <property type="project" value="UniProtKB-UniRule"/>
</dbReference>
<dbReference type="GO" id="GO:0003743">
    <property type="term" value="F:translation initiation factor activity"/>
    <property type="evidence" value="ECO:0007669"/>
    <property type="project" value="UniProtKB-UniRule"/>
</dbReference>
<dbReference type="CDD" id="cd04451">
    <property type="entry name" value="S1_IF1"/>
    <property type="match status" value="1"/>
</dbReference>
<dbReference type="FunFam" id="2.40.50.140:FF:000019">
    <property type="entry name" value="Translation initiation factor IF-1, chloroplastic"/>
    <property type="match status" value="1"/>
</dbReference>
<dbReference type="Gene3D" id="2.40.50.140">
    <property type="entry name" value="Nucleic acid-binding proteins"/>
    <property type="match status" value="1"/>
</dbReference>
<dbReference type="HAMAP" id="MF_00075">
    <property type="entry name" value="IF_1"/>
    <property type="match status" value="1"/>
</dbReference>
<dbReference type="InterPro" id="IPR012340">
    <property type="entry name" value="NA-bd_OB-fold"/>
</dbReference>
<dbReference type="InterPro" id="IPR006196">
    <property type="entry name" value="RNA-binding_domain_S1_IF1"/>
</dbReference>
<dbReference type="InterPro" id="IPR003029">
    <property type="entry name" value="S1_domain"/>
</dbReference>
<dbReference type="InterPro" id="IPR004368">
    <property type="entry name" value="TIF_IF1"/>
</dbReference>
<dbReference type="NCBIfam" id="TIGR00008">
    <property type="entry name" value="infA"/>
    <property type="match status" value="1"/>
</dbReference>
<dbReference type="PANTHER" id="PTHR33370">
    <property type="entry name" value="TRANSLATION INITIATION FACTOR IF-1, CHLOROPLASTIC"/>
    <property type="match status" value="1"/>
</dbReference>
<dbReference type="PANTHER" id="PTHR33370:SF1">
    <property type="entry name" value="TRANSLATION INITIATION FACTOR IF-1, CHLOROPLASTIC"/>
    <property type="match status" value="1"/>
</dbReference>
<dbReference type="Pfam" id="PF01176">
    <property type="entry name" value="eIF-1a"/>
    <property type="match status" value="1"/>
</dbReference>
<dbReference type="SMART" id="SM00316">
    <property type="entry name" value="S1"/>
    <property type="match status" value="1"/>
</dbReference>
<dbReference type="SUPFAM" id="SSF50249">
    <property type="entry name" value="Nucleic acid-binding proteins"/>
    <property type="match status" value="1"/>
</dbReference>
<dbReference type="PROSITE" id="PS50832">
    <property type="entry name" value="S1_IF1_TYPE"/>
    <property type="match status" value="1"/>
</dbReference>
<name>IF1C_MONCA</name>
<organism>
    <name type="scientific">Montinia caryophyllacea</name>
    <name type="common">Wild clove bush</name>
    <dbReference type="NCBI Taxonomy" id="23084"/>
    <lineage>
        <taxon>Eukaryota</taxon>
        <taxon>Viridiplantae</taxon>
        <taxon>Streptophyta</taxon>
        <taxon>Embryophyta</taxon>
        <taxon>Tracheophyta</taxon>
        <taxon>Spermatophyta</taxon>
        <taxon>Magnoliopsida</taxon>
        <taxon>eudicotyledons</taxon>
        <taxon>Gunneridae</taxon>
        <taxon>Pentapetalae</taxon>
        <taxon>asterids</taxon>
        <taxon>lamiids</taxon>
        <taxon>Solanales</taxon>
        <taxon>Montiniaceae</taxon>
        <taxon>Montinia</taxon>
    </lineage>
</organism>
<reference key="1">
    <citation type="journal article" date="2001" name="Plant Cell">
        <title>Many parallel losses of infA from chloroplast DNA during angiosperm evolution with multiple independent transfers to the nucleus.</title>
        <authorList>
            <person name="Millen R.S."/>
            <person name="Olmstead R.G."/>
            <person name="Adams K.L."/>
            <person name="Palmer J.D."/>
            <person name="Lao N.T."/>
            <person name="Heggie L."/>
            <person name="Kavanagh T.A."/>
            <person name="Hibberd J.M."/>
            <person name="Gray J.C."/>
            <person name="Morden C.W."/>
            <person name="Calie P.J."/>
            <person name="Jermiin L.S."/>
            <person name="Wolfe K.H."/>
        </authorList>
    </citation>
    <scope>NUCLEOTIDE SEQUENCE [GENOMIC DNA]</scope>
</reference>
<geneLocation type="chloroplast"/>
<comment type="function">
    <text evidence="1">One of the essential components for the initiation of protein synthesis. Stabilizes the binding of IF-2 and IF-3 on the 30S subunit to which N-formylmethionyl-tRNA(fMet) subsequently binds. Helps modulate mRNA selection, yielding the 30S pre-initiation complex (PIC). Upon addition of the 50S ribosomal subunit IF-1, IF-2 and IF-3 are released leaving the mature 70S translation initiation complex.</text>
</comment>
<comment type="subunit">
    <text evidence="1">Component of the 30S ribosomal translation pre-initiation complex which assembles on the 30S ribosome in the order IF-2 and IF-3, IF-1 and N-formylmethionyl-tRNA(fMet); mRNA recruitment can occur at any time during PIC assembly.</text>
</comment>
<comment type="subcellular location">
    <subcellularLocation>
        <location evidence="1">Plastid</location>
        <location evidence="1">Chloroplast</location>
    </subcellularLocation>
</comment>
<comment type="similarity">
    <text evidence="1">Belongs to the IF-1 family.</text>
</comment>
<accession>Q94PL3</accession>